<feature type="chain" id="PRO_0000092796" description="Phosphate import ATP-binding protein PstB">
    <location>
        <begin position="1"/>
        <end position="282"/>
    </location>
</feature>
<feature type="domain" description="ABC transporter" evidence="1">
    <location>
        <begin position="36"/>
        <end position="277"/>
    </location>
</feature>
<feature type="binding site" evidence="1">
    <location>
        <begin position="68"/>
        <end position="75"/>
    </location>
    <ligand>
        <name>ATP</name>
        <dbReference type="ChEBI" id="CHEBI:30616"/>
    </ligand>
</feature>
<organism>
    <name type="scientific">Burkholderia pseudomallei (strain K96243)</name>
    <dbReference type="NCBI Taxonomy" id="272560"/>
    <lineage>
        <taxon>Bacteria</taxon>
        <taxon>Pseudomonadati</taxon>
        <taxon>Pseudomonadota</taxon>
        <taxon>Betaproteobacteria</taxon>
        <taxon>Burkholderiales</taxon>
        <taxon>Burkholderiaceae</taxon>
        <taxon>Burkholderia</taxon>
        <taxon>pseudomallei group</taxon>
    </lineage>
</organism>
<comment type="function">
    <text evidence="1">Part of the ABC transporter complex PstSACB involved in phosphate import. Responsible for energy coupling to the transport system.</text>
</comment>
<comment type="catalytic activity">
    <reaction evidence="1">
        <text>phosphate(out) + ATP + H2O = ADP + 2 phosphate(in) + H(+)</text>
        <dbReference type="Rhea" id="RHEA:24440"/>
        <dbReference type="ChEBI" id="CHEBI:15377"/>
        <dbReference type="ChEBI" id="CHEBI:15378"/>
        <dbReference type="ChEBI" id="CHEBI:30616"/>
        <dbReference type="ChEBI" id="CHEBI:43474"/>
        <dbReference type="ChEBI" id="CHEBI:456216"/>
        <dbReference type="EC" id="7.3.2.1"/>
    </reaction>
</comment>
<comment type="subunit">
    <text evidence="1">The complex is composed of two ATP-binding proteins (PstB), two transmembrane proteins (PstC and PstA) and a solute-binding protein (PstS).</text>
</comment>
<comment type="subcellular location">
    <subcellularLocation>
        <location evidence="1">Cell inner membrane</location>
        <topology evidence="1">Peripheral membrane protein</topology>
    </subcellularLocation>
</comment>
<comment type="similarity">
    <text evidence="1">Belongs to the ABC transporter superfamily. Phosphate importer (TC 3.A.1.7) family.</text>
</comment>
<dbReference type="EC" id="7.3.2.1" evidence="1"/>
<dbReference type="EMBL" id="BX571965">
    <property type="protein sequence ID" value="CAH35360.1"/>
    <property type="molecule type" value="Genomic_DNA"/>
</dbReference>
<dbReference type="RefSeq" id="WP_004193614.1">
    <property type="nucleotide sequence ID" value="NZ_CP009538.1"/>
</dbReference>
<dbReference type="RefSeq" id="YP_107987.1">
    <property type="nucleotide sequence ID" value="NC_006350.1"/>
</dbReference>
<dbReference type="SMR" id="Q63V79"/>
<dbReference type="STRING" id="272560.BPSL1362"/>
<dbReference type="GeneID" id="93059861"/>
<dbReference type="KEGG" id="bps:BPSL1362"/>
<dbReference type="PATRIC" id="fig|272560.51.peg.118"/>
<dbReference type="eggNOG" id="COG1117">
    <property type="taxonomic scope" value="Bacteria"/>
</dbReference>
<dbReference type="Proteomes" id="UP000000605">
    <property type="component" value="Chromosome 1"/>
</dbReference>
<dbReference type="GO" id="GO:0005886">
    <property type="term" value="C:plasma membrane"/>
    <property type="evidence" value="ECO:0007669"/>
    <property type="project" value="UniProtKB-SubCell"/>
</dbReference>
<dbReference type="GO" id="GO:0005524">
    <property type="term" value="F:ATP binding"/>
    <property type="evidence" value="ECO:0007669"/>
    <property type="project" value="UniProtKB-KW"/>
</dbReference>
<dbReference type="GO" id="GO:0016887">
    <property type="term" value="F:ATP hydrolysis activity"/>
    <property type="evidence" value="ECO:0007669"/>
    <property type="project" value="InterPro"/>
</dbReference>
<dbReference type="GO" id="GO:0015415">
    <property type="term" value="F:ATPase-coupled phosphate ion transmembrane transporter activity"/>
    <property type="evidence" value="ECO:0007669"/>
    <property type="project" value="UniProtKB-EC"/>
</dbReference>
<dbReference type="GO" id="GO:0035435">
    <property type="term" value="P:phosphate ion transmembrane transport"/>
    <property type="evidence" value="ECO:0007669"/>
    <property type="project" value="InterPro"/>
</dbReference>
<dbReference type="CDD" id="cd03260">
    <property type="entry name" value="ABC_PstB_phosphate_transporter"/>
    <property type="match status" value="1"/>
</dbReference>
<dbReference type="FunFam" id="3.40.50.300:FF:000132">
    <property type="entry name" value="Phosphate import ATP-binding protein PstB"/>
    <property type="match status" value="1"/>
</dbReference>
<dbReference type="Gene3D" id="3.40.50.300">
    <property type="entry name" value="P-loop containing nucleotide triphosphate hydrolases"/>
    <property type="match status" value="1"/>
</dbReference>
<dbReference type="InterPro" id="IPR003593">
    <property type="entry name" value="AAA+_ATPase"/>
</dbReference>
<dbReference type="InterPro" id="IPR003439">
    <property type="entry name" value="ABC_transporter-like_ATP-bd"/>
</dbReference>
<dbReference type="InterPro" id="IPR017871">
    <property type="entry name" value="ABC_transporter-like_CS"/>
</dbReference>
<dbReference type="InterPro" id="IPR027417">
    <property type="entry name" value="P-loop_NTPase"/>
</dbReference>
<dbReference type="InterPro" id="IPR005670">
    <property type="entry name" value="PstB-like"/>
</dbReference>
<dbReference type="NCBIfam" id="TIGR00972">
    <property type="entry name" value="3a0107s01c2"/>
    <property type="match status" value="1"/>
</dbReference>
<dbReference type="PANTHER" id="PTHR43423">
    <property type="entry name" value="ABC TRANSPORTER I FAMILY MEMBER 17"/>
    <property type="match status" value="1"/>
</dbReference>
<dbReference type="PANTHER" id="PTHR43423:SF3">
    <property type="entry name" value="PHOSPHATE IMPORT ATP-BINDING PROTEIN PSTB"/>
    <property type="match status" value="1"/>
</dbReference>
<dbReference type="Pfam" id="PF00005">
    <property type="entry name" value="ABC_tran"/>
    <property type="match status" value="1"/>
</dbReference>
<dbReference type="SMART" id="SM00382">
    <property type="entry name" value="AAA"/>
    <property type="match status" value="1"/>
</dbReference>
<dbReference type="SUPFAM" id="SSF52540">
    <property type="entry name" value="P-loop containing nucleoside triphosphate hydrolases"/>
    <property type="match status" value="1"/>
</dbReference>
<dbReference type="PROSITE" id="PS00211">
    <property type="entry name" value="ABC_TRANSPORTER_1"/>
    <property type="match status" value="1"/>
</dbReference>
<dbReference type="PROSITE" id="PS50893">
    <property type="entry name" value="ABC_TRANSPORTER_2"/>
    <property type="match status" value="1"/>
</dbReference>
<dbReference type="PROSITE" id="PS51238">
    <property type="entry name" value="PSTB"/>
    <property type="match status" value="1"/>
</dbReference>
<sequence>MNMAESHLDPSKLATGPAGFGAAAGQRPLAPLNAKIEVKNLNFFYNQFHALKNINLSIPEGKVTAFIGPSGCGKSTLLRTFNKMYALYPEQRAEGEIVMDGENLLQSKLDISLLRARIGMVFQKPTPFPMSIYDNIAFGVKMFERLTRSEMDDRVEWALTKAALWNEVKDKLSQSGYGLSGGQQQRLCIARGIAIRPEVLLLDEPCSALDPISTGRIEELIAELKSDYTVVIVTHNMQQAARCSDYTAYMYLGELIEFGETEKIFIKPARKETEDYITGRFG</sequence>
<reference key="1">
    <citation type="journal article" date="2004" name="Proc. Natl. Acad. Sci. U.S.A.">
        <title>Genomic plasticity of the causative agent of melioidosis, Burkholderia pseudomallei.</title>
        <authorList>
            <person name="Holden M.T.G."/>
            <person name="Titball R.W."/>
            <person name="Peacock S.J."/>
            <person name="Cerdeno-Tarraga A.-M."/>
            <person name="Atkins T."/>
            <person name="Crossman L.C."/>
            <person name="Pitt T."/>
            <person name="Churcher C."/>
            <person name="Mungall K.L."/>
            <person name="Bentley S.D."/>
            <person name="Sebaihia M."/>
            <person name="Thomson N.R."/>
            <person name="Bason N."/>
            <person name="Beacham I.R."/>
            <person name="Brooks K."/>
            <person name="Brown K.A."/>
            <person name="Brown N.F."/>
            <person name="Challis G.L."/>
            <person name="Cherevach I."/>
            <person name="Chillingworth T."/>
            <person name="Cronin A."/>
            <person name="Crossett B."/>
            <person name="Davis P."/>
            <person name="DeShazer D."/>
            <person name="Feltwell T."/>
            <person name="Fraser A."/>
            <person name="Hance Z."/>
            <person name="Hauser H."/>
            <person name="Holroyd S."/>
            <person name="Jagels K."/>
            <person name="Keith K.E."/>
            <person name="Maddison M."/>
            <person name="Moule S."/>
            <person name="Price C."/>
            <person name="Quail M.A."/>
            <person name="Rabbinowitsch E."/>
            <person name="Rutherford K."/>
            <person name="Sanders M."/>
            <person name="Simmonds M."/>
            <person name="Songsivilai S."/>
            <person name="Stevens K."/>
            <person name="Tumapa S."/>
            <person name="Vesaratchavest M."/>
            <person name="Whitehead S."/>
            <person name="Yeats C."/>
            <person name="Barrell B.G."/>
            <person name="Oyston P.C.F."/>
            <person name="Parkhill J."/>
        </authorList>
    </citation>
    <scope>NUCLEOTIDE SEQUENCE [LARGE SCALE GENOMIC DNA]</scope>
    <source>
        <strain>K96243</strain>
    </source>
</reference>
<gene>
    <name evidence="1" type="primary">pstB</name>
    <name type="synonym">phoT</name>
    <name type="ordered locus">BPSL1362</name>
</gene>
<proteinExistence type="inferred from homology"/>
<name>PSTB_BURPS</name>
<accession>Q63V79</accession>
<keyword id="KW-0067">ATP-binding</keyword>
<keyword id="KW-0997">Cell inner membrane</keyword>
<keyword id="KW-1003">Cell membrane</keyword>
<keyword id="KW-0472">Membrane</keyword>
<keyword id="KW-0547">Nucleotide-binding</keyword>
<keyword id="KW-0592">Phosphate transport</keyword>
<keyword id="KW-1185">Reference proteome</keyword>
<keyword id="KW-1278">Translocase</keyword>
<keyword id="KW-0813">Transport</keyword>
<evidence type="ECO:0000255" key="1">
    <source>
        <dbReference type="HAMAP-Rule" id="MF_01702"/>
    </source>
</evidence>
<protein>
    <recommendedName>
        <fullName evidence="1">Phosphate import ATP-binding protein PstB</fullName>
        <ecNumber evidence="1">7.3.2.1</ecNumber>
    </recommendedName>
    <alternativeName>
        <fullName evidence="1">ABC phosphate transporter</fullName>
    </alternativeName>
    <alternativeName>
        <fullName evidence="1">Phosphate-transporting ATPase</fullName>
    </alternativeName>
</protein>